<keyword id="KW-0175">Coiled coil</keyword>
<keyword id="KW-0597">Phosphoprotein</keyword>
<keyword id="KW-1185">Reference proteome</keyword>
<comment type="similarity">
    <text evidence="4">Belongs to the CWF19 family.</text>
</comment>
<name>C19L2_DROME</name>
<gene>
    <name type="ORF">CG9213</name>
</gene>
<reference key="1">
    <citation type="journal article" date="2000" name="Science">
        <title>The genome sequence of Drosophila melanogaster.</title>
        <authorList>
            <person name="Adams M.D."/>
            <person name="Celniker S.E."/>
            <person name="Holt R.A."/>
            <person name="Evans C.A."/>
            <person name="Gocayne J.D."/>
            <person name="Amanatides P.G."/>
            <person name="Scherer S.E."/>
            <person name="Li P.W."/>
            <person name="Hoskins R.A."/>
            <person name="Galle R.F."/>
            <person name="George R.A."/>
            <person name="Lewis S.E."/>
            <person name="Richards S."/>
            <person name="Ashburner M."/>
            <person name="Henderson S.N."/>
            <person name="Sutton G.G."/>
            <person name="Wortman J.R."/>
            <person name="Yandell M.D."/>
            <person name="Zhang Q."/>
            <person name="Chen L.X."/>
            <person name="Brandon R.C."/>
            <person name="Rogers Y.-H.C."/>
            <person name="Blazej R.G."/>
            <person name="Champe M."/>
            <person name="Pfeiffer B.D."/>
            <person name="Wan K.H."/>
            <person name="Doyle C."/>
            <person name="Baxter E.G."/>
            <person name="Helt G."/>
            <person name="Nelson C.R."/>
            <person name="Miklos G.L.G."/>
            <person name="Abril J.F."/>
            <person name="Agbayani A."/>
            <person name="An H.-J."/>
            <person name="Andrews-Pfannkoch C."/>
            <person name="Baldwin D."/>
            <person name="Ballew R.M."/>
            <person name="Basu A."/>
            <person name="Baxendale J."/>
            <person name="Bayraktaroglu L."/>
            <person name="Beasley E.M."/>
            <person name="Beeson K.Y."/>
            <person name="Benos P.V."/>
            <person name="Berman B.P."/>
            <person name="Bhandari D."/>
            <person name="Bolshakov S."/>
            <person name="Borkova D."/>
            <person name="Botchan M.R."/>
            <person name="Bouck J."/>
            <person name="Brokstein P."/>
            <person name="Brottier P."/>
            <person name="Burtis K.C."/>
            <person name="Busam D.A."/>
            <person name="Butler H."/>
            <person name="Cadieu E."/>
            <person name="Center A."/>
            <person name="Chandra I."/>
            <person name="Cherry J.M."/>
            <person name="Cawley S."/>
            <person name="Dahlke C."/>
            <person name="Davenport L.B."/>
            <person name="Davies P."/>
            <person name="de Pablos B."/>
            <person name="Delcher A."/>
            <person name="Deng Z."/>
            <person name="Mays A.D."/>
            <person name="Dew I."/>
            <person name="Dietz S.M."/>
            <person name="Dodson K."/>
            <person name="Doup L.E."/>
            <person name="Downes M."/>
            <person name="Dugan-Rocha S."/>
            <person name="Dunkov B.C."/>
            <person name="Dunn P."/>
            <person name="Durbin K.J."/>
            <person name="Evangelista C.C."/>
            <person name="Ferraz C."/>
            <person name="Ferriera S."/>
            <person name="Fleischmann W."/>
            <person name="Fosler C."/>
            <person name="Gabrielian A.E."/>
            <person name="Garg N.S."/>
            <person name="Gelbart W.M."/>
            <person name="Glasser K."/>
            <person name="Glodek A."/>
            <person name="Gong F."/>
            <person name="Gorrell J.H."/>
            <person name="Gu Z."/>
            <person name="Guan P."/>
            <person name="Harris M."/>
            <person name="Harris N.L."/>
            <person name="Harvey D.A."/>
            <person name="Heiman T.J."/>
            <person name="Hernandez J.R."/>
            <person name="Houck J."/>
            <person name="Hostin D."/>
            <person name="Houston K.A."/>
            <person name="Howland T.J."/>
            <person name="Wei M.-H."/>
            <person name="Ibegwam C."/>
            <person name="Jalali M."/>
            <person name="Kalush F."/>
            <person name="Karpen G.H."/>
            <person name="Ke Z."/>
            <person name="Kennison J.A."/>
            <person name="Ketchum K.A."/>
            <person name="Kimmel B.E."/>
            <person name="Kodira C.D."/>
            <person name="Kraft C.L."/>
            <person name="Kravitz S."/>
            <person name="Kulp D."/>
            <person name="Lai Z."/>
            <person name="Lasko P."/>
            <person name="Lei Y."/>
            <person name="Levitsky A.A."/>
            <person name="Li J.H."/>
            <person name="Li Z."/>
            <person name="Liang Y."/>
            <person name="Lin X."/>
            <person name="Liu X."/>
            <person name="Mattei B."/>
            <person name="McIntosh T.C."/>
            <person name="McLeod M.P."/>
            <person name="McPherson D."/>
            <person name="Merkulov G."/>
            <person name="Milshina N.V."/>
            <person name="Mobarry C."/>
            <person name="Morris J."/>
            <person name="Moshrefi A."/>
            <person name="Mount S.M."/>
            <person name="Moy M."/>
            <person name="Murphy B."/>
            <person name="Murphy L."/>
            <person name="Muzny D.M."/>
            <person name="Nelson D.L."/>
            <person name="Nelson D.R."/>
            <person name="Nelson K.A."/>
            <person name="Nixon K."/>
            <person name="Nusskern D.R."/>
            <person name="Pacleb J.M."/>
            <person name="Palazzolo M."/>
            <person name="Pittman G.S."/>
            <person name="Pan S."/>
            <person name="Pollard J."/>
            <person name="Puri V."/>
            <person name="Reese M.G."/>
            <person name="Reinert K."/>
            <person name="Remington K."/>
            <person name="Saunders R.D.C."/>
            <person name="Scheeler F."/>
            <person name="Shen H."/>
            <person name="Shue B.C."/>
            <person name="Siden-Kiamos I."/>
            <person name="Simpson M."/>
            <person name="Skupski M.P."/>
            <person name="Smith T.J."/>
            <person name="Spier E."/>
            <person name="Spradling A.C."/>
            <person name="Stapleton M."/>
            <person name="Strong R."/>
            <person name="Sun E."/>
            <person name="Svirskas R."/>
            <person name="Tector C."/>
            <person name="Turner R."/>
            <person name="Venter E."/>
            <person name="Wang A.H."/>
            <person name="Wang X."/>
            <person name="Wang Z.-Y."/>
            <person name="Wassarman D.A."/>
            <person name="Weinstock G.M."/>
            <person name="Weissenbach J."/>
            <person name="Williams S.M."/>
            <person name="Woodage T."/>
            <person name="Worley K.C."/>
            <person name="Wu D."/>
            <person name="Yang S."/>
            <person name="Yao Q.A."/>
            <person name="Ye J."/>
            <person name="Yeh R.-F."/>
            <person name="Zaveri J.S."/>
            <person name="Zhan M."/>
            <person name="Zhang G."/>
            <person name="Zhao Q."/>
            <person name="Zheng L."/>
            <person name="Zheng X.H."/>
            <person name="Zhong F.N."/>
            <person name="Zhong W."/>
            <person name="Zhou X."/>
            <person name="Zhu S.C."/>
            <person name="Zhu X."/>
            <person name="Smith H.O."/>
            <person name="Gibbs R.A."/>
            <person name="Myers E.W."/>
            <person name="Rubin G.M."/>
            <person name="Venter J.C."/>
        </authorList>
    </citation>
    <scope>NUCLEOTIDE SEQUENCE [LARGE SCALE GENOMIC DNA]</scope>
    <source>
        <strain>Berkeley</strain>
    </source>
</reference>
<reference key="2">
    <citation type="journal article" date="2002" name="Genome Biol.">
        <title>Annotation of the Drosophila melanogaster euchromatic genome: a systematic review.</title>
        <authorList>
            <person name="Misra S."/>
            <person name="Crosby M.A."/>
            <person name="Mungall C.J."/>
            <person name="Matthews B.B."/>
            <person name="Campbell K.S."/>
            <person name="Hradecky P."/>
            <person name="Huang Y."/>
            <person name="Kaminker J.S."/>
            <person name="Millburn G.H."/>
            <person name="Prochnik S.E."/>
            <person name="Smith C.D."/>
            <person name="Tupy J.L."/>
            <person name="Whitfield E.J."/>
            <person name="Bayraktaroglu L."/>
            <person name="Berman B.P."/>
            <person name="Bettencourt B.R."/>
            <person name="Celniker S.E."/>
            <person name="de Grey A.D.N.J."/>
            <person name="Drysdale R.A."/>
            <person name="Harris N.L."/>
            <person name="Richter J."/>
            <person name="Russo S."/>
            <person name="Schroeder A.J."/>
            <person name="Shu S.Q."/>
            <person name="Stapleton M."/>
            <person name="Yamada C."/>
            <person name="Ashburner M."/>
            <person name="Gelbart W.M."/>
            <person name="Rubin G.M."/>
            <person name="Lewis S.E."/>
        </authorList>
    </citation>
    <scope>GENOME REANNOTATION</scope>
    <source>
        <strain>Berkeley</strain>
    </source>
</reference>
<reference key="3">
    <citation type="journal article" date="2002" name="Genome Biol.">
        <title>A Drosophila full-length cDNA resource.</title>
        <authorList>
            <person name="Stapleton M."/>
            <person name="Carlson J.W."/>
            <person name="Brokstein P."/>
            <person name="Yu C."/>
            <person name="Champe M."/>
            <person name="George R.A."/>
            <person name="Guarin H."/>
            <person name="Kronmiller B."/>
            <person name="Pacleb J.M."/>
            <person name="Park S."/>
            <person name="Wan K.H."/>
            <person name="Rubin G.M."/>
            <person name="Celniker S.E."/>
        </authorList>
    </citation>
    <scope>NUCLEOTIDE SEQUENCE [LARGE SCALE MRNA]</scope>
    <source>
        <strain>Berkeley</strain>
        <tissue>Embryo</tissue>
    </source>
</reference>
<reference key="4">
    <citation type="journal article" date="2008" name="J. Proteome Res.">
        <title>Phosphoproteome analysis of Drosophila melanogaster embryos.</title>
        <authorList>
            <person name="Zhai B."/>
            <person name="Villen J."/>
            <person name="Beausoleil S.A."/>
            <person name="Mintseris J."/>
            <person name="Gygi S.P."/>
        </authorList>
    </citation>
    <scope>PHOSPHORYLATION [LARGE SCALE ANALYSIS] AT SER-128 AND SER-130</scope>
    <scope>IDENTIFICATION BY MASS SPECTROMETRY</scope>
    <source>
        <tissue>Embryo</tissue>
    </source>
</reference>
<feature type="chain" id="PRO_0000315652" description="CWF19-like protein 2 homolog">
    <location>
        <begin position="1"/>
        <end position="687"/>
    </location>
</feature>
<feature type="region of interest" description="Disordered" evidence="2">
    <location>
        <begin position="24"/>
        <end position="281"/>
    </location>
</feature>
<feature type="region of interest" description="Disordered" evidence="2">
    <location>
        <begin position="355"/>
        <end position="383"/>
    </location>
</feature>
<feature type="coiled-coil region" evidence="1">
    <location>
        <begin position="6"/>
        <end position="51"/>
    </location>
</feature>
<feature type="coiled-coil region" evidence="1">
    <location>
        <begin position="108"/>
        <end position="131"/>
    </location>
</feature>
<feature type="coiled-coil region" evidence="1">
    <location>
        <begin position="290"/>
        <end position="325"/>
    </location>
</feature>
<feature type="coiled-coil region" evidence="1">
    <location>
        <begin position="444"/>
        <end position="475"/>
    </location>
</feature>
<feature type="compositionally biased region" description="Basic and acidic residues" evidence="2">
    <location>
        <begin position="24"/>
        <end position="50"/>
    </location>
</feature>
<feature type="compositionally biased region" description="Basic residues" evidence="2">
    <location>
        <begin position="66"/>
        <end position="92"/>
    </location>
</feature>
<feature type="compositionally biased region" description="Low complexity" evidence="2">
    <location>
        <begin position="93"/>
        <end position="107"/>
    </location>
</feature>
<feature type="compositionally biased region" description="Basic residues" evidence="2">
    <location>
        <begin position="114"/>
        <end position="125"/>
    </location>
</feature>
<feature type="compositionally biased region" description="Basic and acidic residues" evidence="2">
    <location>
        <begin position="146"/>
        <end position="157"/>
    </location>
</feature>
<feature type="compositionally biased region" description="Basic and acidic residues" evidence="2">
    <location>
        <begin position="168"/>
        <end position="180"/>
    </location>
</feature>
<feature type="modified residue" description="Phosphoserine" evidence="3">
    <location>
        <position position="128"/>
    </location>
</feature>
<feature type="modified residue" description="Phosphoserine" evidence="3">
    <location>
        <position position="130"/>
    </location>
</feature>
<protein>
    <recommendedName>
        <fullName>CWF19-like protein 2 homolog</fullName>
    </recommendedName>
</protein>
<accession>Q9VXT5</accession>
<accession>Q95RI4</accession>
<organism>
    <name type="scientific">Drosophila melanogaster</name>
    <name type="common">Fruit fly</name>
    <dbReference type="NCBI Taxonomy" id="7227"/>
    <lineage>
        <taxon>Eukaryota</taxon>
        <taxon>Metazoa</taxon>
        <taxon>Ecdysozoa</taxon>
        <taxon>Arthropoda</taxon>
        <taxon>Hexapoda</taxon>
        <taxon>Insecta</taxon>
        <taxon>Pterygota</taxon>
        <taxon>Neoptera</taxon>
        <taxon>Endopterygota</taxon>
        <taxon>Diptera</taxon>
        <taxon>Brachycera</taxon>
        <taxon>Muscomorpha</taxon>
        <taxon>Ephydroidea</taxon>
        <taxon>Drosophilidae</taxon>
        <taxon>Drosophila</taxon>
        <taxon>Sophophora</taxon>
    </lineage>
</organism>
<dbReference type="EMBL" id="AE014298">
    <property type="protein sequence ID" value="AAF48473.2"/>
    <property type="molecule type" value="Genomic_DNA"/>
</dbReference>
<dbReference type="EMBL" id="AY061353">
    <property type="protein sequence ID" value="AAL28901.1"/>
    <property type="molecule type" value="mRNA"/>
</dbReference>
<dbReference type="RefSeq" id="NP_001285277.1">
    <property type="nucleotide sequence ID" value="NM_001298348.1"/>
</dbReference>
<dbReference type="RefSeq" id="NP_788910.1">
    <property type="nucleotide sequence ID" value="NM_176737.3"/>
</dbReference>
<dbReference type="SMR" id="Q9VXT5"/>
<dbReference type="BioGRID" id="58841">
    <property type="interactions" value="4"/>
</dbReference>
<dbReference type="FunCoup" id="Q9VXT5">
    <property type="interactions" value="1965"/>
</dbReference>
<dbReference type="IntAct" id="Q9VXT5">
    <property type="interactions" value="2"/>
</dbReference>
<dbReference type="STRING" id="7227.FBpp0073887"/>
<dbReference type="iPTMnet" id="Q9VXT5"/>
<dbReference type="PaxDb" id="7227-FBpp0073887"/>
<dbReference type="EnsemblMetazoa" id="FBtr0074071">
    <property type="protein sequence ID" value="FBpp0073887"/>
    <property type="gene ID" value="FBgn0030655"/>
</dbReference>
<dbReference type="EnsemblMetazoa" id="FBtr0340348">
    <property type="protein sequence ID" value="FBpp0309306"/>
    <property type="gene ID" value="FBgn0030655"/>
</dbReference>
<dbReference type="GeneID" id="32490"/>
<dbReference type="KEGG" id="dme:Dmel_CG9213"/>
<dbReference type="UCSC" id="CG9213-RA">
    <property type="organism name" value="d. melanogaster"/>
</dbReference>
<dbReference type="AGR" id="FB:FBgn0030655"/>
<dbReference type="FlyBase" id="FBgn0030655">
    <property type="gene designation" value="CG9213"/>
</dbReference>
<dbReference type="VEuPathDB" id="VectorBase:FBgn0030655"/>
<dbReference type="eggNOG" id="KOG2477">
    <property type="taxonomic scope" value="Eukaryota"/>
</dbReference>
<dbReference type="HOGENOM" id="CLU_015540_3_0_1"/>
<dbReference type="InParanoid" id="Q9VXT5"/>
<dbReference type="OMA" id="PWHVGLQ"/>
<dbReference type="OrthoDB" id="2113965at2759"/>
<dbReference type="PhylomeDB" id="Q9VXT5"/>
<dbReference type="BioGRID-ORCS" id="32490">
    <property type="hits" value="0 hits in 1 CRISPR screen"/>
</dbReference>
<dbReference type="GenomeRNAi" id="32490"/>
<dbReference type="PRO" id="PR:Q9VXT5"/>
<dbReference type="Proteomes" id="UP000000803">
    <property type="component" value="Chromosome X"/>
</dbReference>
<dbReference type="Bgee" id="FBgn0030655">
    <property type="expression patterns" value="Expressed in T neuron T5b (Drosophila) in embryonic/larval optic lobe (Drosophila) and 24 other cell types or tissues"/>
</dbReference>
<dbReference type="ExpressionAtlas" id="Q9VXT5">
    <property type="expression patterns" value="baseline and differential"/>
</dbReference>
<dbReference type="GO" id="GO:0071014">
    <property type="term" value="C:post-mRNA release spliceosomal complex"/>
    <property type="evidence" value="ECO:0000318"/>
    <property type="project" value="GO_Central"/>
</dbReference>
<dbReference type="GO" id="GO:0000398">
    <property type="term" value="P:mRNA splicing, via spliceosome"/>
    <property type="evidence" value="ECO:0000318"/>
    <property type="project" value="GO_Central"/>
</dbReference>
<dbReference type="Gene3D" id="3.30.428.10">
    <property type="entry name" value="HIT-like"/>
    <property type="match status" value="1"/>
</dbReference>
<dbReference type="InterPro" id="IPR040194">
    <property type="entry name" value="Cwf19-like"/>
</dbReference>
<dbReference type="InterPro" id="IPR006768">
    <property type="entry name" value="Cwf19-like_C_dom-1"/>
</dbReference>
<dbReference type="InterPro" id="IPR006767">
    <property type="entry name" value="Cwf19-like_C_dom-2"/>
</dbReference>
<dbReference type="InterPro" id="IPR036265">
    <property type="entry name" value="HIT-like_sf"/>
</dbReference>
<dbReference type="PANTHER" id="PTHR12072">
    <property type="entry name" value="CWF19, CELL CYCLE CONTROL PROTEIN"/>
    <property type="match status" value="1"/>
</dbReference>
<dbReference type="PANTHER" id="PTHR12072:SF5">
    <property type="entry name" value="CWF19-LIKE PROTEIN 2"/>
    <property type="match status" value="1"/>
</dbReference>
<dbReference type="Pfam" id="PF04677">
    <property type="entry name" value="CwfJ_C_1"/>
    <property type="match status" value="1"/>
</dbReference>
<dbReference type="Pfam" id="PF04676">
    <property type="entry name" value="CwfJ_C_2"/>
    <property type="match status" value="1"/>
</dbReference>
<dbReference type="SUPFAM" id="SSF54197">
    <property type="entry name" value="HIT-like"/>
    <property type="match status" value="1"/>
</dbReference>
<evidence type="ECO:0000255" key="1"/>
<evidence type="ECO:0000256" key="2">
    <source>
        <dbReference type="SAM" id="MobiDB-lite"/>
    </source>
</evidence>
<evidence type="ECO:0000269" key="3">
    <source>
    </source>
</evidence>
<evidence type="ECO:0000305" key="4"/>
<sequence>MSYIQFESGREKDKARQELREAREAMLQQAKERAELRGQRERQKELRGEADWMLPALAKKLEKPAKKSKKNVSKHKSRSKSKSSKKSRKHRNSSSSSESSTSSSSSFSEDEKERKRRKKKSKRSRKESASEDEWVEAPPPLAADNVTKKEPPQRDDWMTSESLLLKTFSRERKEPAKPNEKAQQIDAYDPAKSGRELNPYWKSNGTGLPGFQKPQDDDERQAKPHSSSSAQGSSRGWRKPGAKAPSPPRRSRSRSKSATSSDEEEEEAVQQPKSRPSCLTDEQINELAGKAIKAELKGKKELAAELNQQLEAARKERAEFIASGESVRNANTRPAKSKASAEHVLLTKVDQSGNVRPLVQSGDPNESYGGRMGPKRGSKKVDTHVDGQRVRYFADDDRYDIKQMFEREKHATAAEVNLQYADIVSKHKNPNDDLDDIFADKVRKQISASDAEKREMQSAIREHEKLVATLDNCERCFDSAKLDKQLLVSLGDKIYLSLPWYMGLQSGHCILTTLQHVPCCTQLDEDAWEEISNFRKALTRMFAARRQDVVFYEIANKLHRRPHLSVHCIPIPASQGEMAPFYFKKAIEESEQEWCINKQLVSLRQKSLRAAIPKGLPYVWVHFGMDSGFAHVIEDEDRFPANFAQEILGGMLELNPNAWRKPRKEANPIGKVKSFAENWKKFDCTQN</sequence>
<proteinExistence type="evidence at protein level"/>